<keyword id="KW-1185">Reference proteome</keyword>
<keyword id="KW-0687">Ribonucleoprotein</keyword>
<keyword id="KW-0689">Ribosomal protein</keyword>
<keyword id="KW-0694">RNA-binding</keyword>
<keyword id="KW-0699">rRNA-binding</keyword>
<proteinExistence type="inferred from homology"/>
<protein>
    <recommendedName>
        <fullName evidence="1">Large ribosomal subunit protein uL24</fullName>
    </recommendedName>
    <alternativeName>
        <fullName evidence="2">50S ribosomal protein L24</fullName>
    </alternativeName>
</protein>
<comment type="function">
    <text evidence="1">One of two assembly initiator proteins, it binds directly to the 5'-end of the 23S rRNA, where it nucleates assembly of the 50S subunit.</text>
</comment>
<comment type="function">
    <text evidence="1">One of the proteins that surrounds the polypeptide exit tunnel on the outside of the subunit.</text>
</comment>
<comment type="subunit">
    <text evidence="1">Part of the 50S ribosomal subunit.</text>
</comment>
<comment type="similarity">
    <text evidence="1">Belongs to the universal ribosomal protein uL24 family.</text>
</comment>
<name>RL24_CORU7</name>
<reference key="1">
    <citation type="journal article" date="2008" name="J. Biotechnol.">
        <title>The lifestyle of Corynebacterium urealyticum derived from its complete genome sequence established by pyrosequencing.</title>
        <authorList>
            <person name="Tauch A."/>
            <person name="Trost E."/>
            <person name="Tilker A."/>
            <person name="Ludewig U."/>
            <person name="Schneiker S."/>
            <person name="Goesmann A."/>
            <person name="Arnold W."/>
            <person name="Bekel T."/>
            <person name="Brinkrolf K."/>
            <person name="Brune I."/>
            <person name="Goetker S."/>
            <person name="Kalinowski J."/>
            <person name="Kamp P.-B."/>
            <person name="Lobo F.P."/>
            <person name="Viehoever P."/>
            <person name="Weisshaar B."/>
            <person name="Soriano F."/>
            <person name="Droege M."/>
            <person name="Puehler A."/>
        </authorList>
    </citation>
    <scope>NUCLEOTIDE SEQUENCE [LARGE SCALE GENOMIC DNA]</scope>
    <source>
        <strain>ATCC 43042 / DSM 7109</strain>
    </source>
</reference>
<feature type="chain" id="PRO_1000141983" description="Large ribosomal subunit protein uL24">
    <location>
        <begin position="1"/>
        <end position="103"/>
    </location>
</feature>
<accession>B1VEW5</accession>
<evidence type="ECO:0000255" key="1">
    <source>
        <dbReference type="HAMAP-Rule" id="MF_01326"/>
    </source>
</evidence>
<evidence type="ECO:0000305" key="2"/>
<organism>
    <name type="scientific">Corynebacterium urealyticum (strain ATCC 43042 / DSM 7109)</name>
    <dbReference type="NCBI Taxonomy" id="504474"/>
    <lineage>
        <taxon>Bacteria</taxon>
        <taxon>Bacillati</taxon>
        <taxon>Actinomycetota</taxon>
        <taxon>Actinomycetes</taxon>
        <taxon>Mycobacteriales</taxon>
        <taxon>Corynebacteriaceae</taxon>
        <taxon>Corynebacterium</taxon>
    </lineage>
</organism>
<gene>
    <name evidence="1" type="primary">rplX</name>
    <name type="ordered locus">cu0344</name>
</gene>
<dbReference type="EMBL" id="AM942444">
    <property type="protein sequence ID" value="CAQ04304.1"/>
    <property type="molecule type" value="Genomic_DNA"/>
</dbReference>
<dbReference type="RefSeq" id="WP_012359597.1">
    <property type="nucleotide sequence ID" value="NC_010545.1"/>
</dbReference>
<dbReference type="SMR" id="B1VEW5"/>
<dbReference type="STRING" id="504474.cu0344"/>
<dbReference type="GeneID" id="60605147"/>
<dbReference type="KEGG" id="cur:cu0344"/>
<dbReference type="eggNOG" id="COG0198">
    <property type="taxonomic scope" value="Bacteria"/>
</dbReference>
<dbReference type="HOGENOM" id="CLU_093315_2_3_11"/>
<dbReference type="Proteomes" id="UP000001727">
    <property type="component" value="Chromosome"/>
</dbReference>
<dbReference type="GO" id="GO:1990904">
    <property type="term" value="C:ribonucleoprotein complex"/>
    <property type="evidence" value="ECO:0007669"/>
    <property type="project" value="UniProtKB-KW"/>
</dbReference>
<dbReference type="GO" id="GO:0005840">
    <property type="term" value="C:ribosome"/>
    <property type="evidence" value="ECO:0007669"/>
    <property type="project" value="UniProtKB-KW"/>
</dbReference>
<dbReference type="GO" id="GO:0019843">
    <property type="term" value="F:rRNA binding"/>
    <property type="evidence" value="ECO:0007669"/>
    <property type="project" value="UniProtKB-UniRule"/>
</dbReference>
<dbReference type="GO" id="GO:0003735">
    <property type="term" value="F:structural constituent of ribosome"/>
    <property type="evidence" value="ECO:0007669"/>
    <property type="project" value="InterPro"/>
</dbReference>
<dbReference type="GO" id="GO:0006412">
    <property type="term" value="P:translation"/>
    <property type="evidence" value="ECO:0007669"/>
    <property type="project" value="UniProtKB-UniRule"/>
</dbReference>
<dbReference type="CDD" id="cd06089">
    <property type="entry name" value="KOW_RPL26"/>
    <property type="match status" value="1"/>
</dbReference>
<dbReference type="FunFam" id="2.30.30.30:FF:000004">
    <property type="entry name" value="50S ribosomal protein L24"/>
    <property type="match status" value="1"/>
</dbReference>
<dbReference type="Gene3D" id="2.30.30.30">
    <property type="match status" value="1"/>
</dbReference>
<dbReference type="HAMAP" id="MF_01326_B">
    <property type="entry name" value="Ribosomal_uL24_B"/>
    <property type="match status" value="1"/>
</dbReference>
<dbReference type="InterPro" id="IPR005824">
    <property type="entry name" value="KOW"/>
</dbReference>
<dbReference type="InterPro" id="IPR014722">
    <property type="entry name" value="Rib_uL2_dom2"/>
</dbReference>
<dbReference type="InterPro" id="IPR003256">
    <property type="entry name" value="Ribosomal_uL24"/>
</dbReference>
<dbReference type="InterPro" id="IPR005825">
    <property type="entry name" value="Ribosomal_uL24_CS"/>
</dbReference>
<dbReference type="InterPro" id="IPR041988">
    <property type="entry name" value="Ribosomal_uL24_KOW"/>
</dbReference>
<dbReference type="InterPro" id="IPR008991">
    <property type="entry name" value="Translation_prot_SH3-like_sf"/>
</dbReference>
<dbReference type="NCBIfam" id="TIGR01079">
    <property type="entry name" value="rplX_bact"/>
    <property type="match status" value="1"/>
</dbReference>
<dbReference type="PANTHER" id="PTHR12903">
    <property type="entry name" value="MITOCHONDRIAL RIBOSOMAL PROTEIN L24"/>
    <property type="match status" value="1"/>
</dbReference>
<dbReference type="Pfam" id="PF00467">
    <property type="entry name" value="KOW"/>
    <property type="match status" value="1"/>
</dbReference>
<dbReference type="Pfam" id="PF17136">
    <property type="entry name" value="ribosomal_L24"/>
    <property type="match status" value="1"/>
</dbReference>
<dbReference type="SMART" id="SM00739">
    <property type="entry name" value="KOW"/>
    <property type="match status" value="1"/>
</dbReference>
<dbReference type="SUPFAM" id="SSF50104">
    <property type="entry name" value="Translation proteins SH3-like domain"/>
    <property type="match status" value="1"/>
</dbReference>
<dbReference type="PROSITE" id="PS01108">
    <property type="entry name" value="RIBOSOMAL_L24"/>
    <property type="match status" value="1"/>
</dbReference>
<sequence>MKIRKGDTVIVISGPDKGAKGKVIEAYPKRDKVLVEGVNRIKKHVANSAPERGAESGGIVTQEAPIHVSNVMVIDSDGNPTRIGYRFEDGKKIRVSKRNGKDI</sequence>